<reference key="1">
    <citation type="journal article" date="2011" name="J. Bacteriol.">
        <title>Complete genome sequence and updated annotation of Desulfovibrio alaskensis G20.</title>
        <authorList>
            <person name="Hauser L.J."/>
            <person name="Land M.L."/>
            <person name="Brown S.D."/>
            <person name="Larimer F."/>
            <person name="Keller K.L."/>
            <person name="Rapp-Giles B.J."/>
            <person name="Price M.N."/>
            <person name="Lin M."/>
            <person name="Bruce D.C."/>
            <person name="Detter J.C."/>
            <person name="Tapia R."/>
            <person name="Han C.S."/>
            <person name="Goodwin L.A."/>
            <person name="Cheng J.F."/>
            <person name="Pitluck S."/>
            <person name="Copeland A."/>
            <person name="Lucas S."/>
            <person name="Nolan M."/>
            <person name="Lapidus A.L."/>
            <person name="Palumbo A.V."/>
            <person name="Wall J.D."/>
        </authorList>
    </citation>
    <scope>NUCLEOTIDE SEQUENCE [LARGE SCALE GENOMIC DNA]</scope>
    <source>
        <strain>ATCC BAA-1058 / DSM 17464 / G20</strain>
    </source>
</reference>
<dbReference type="EMBL" id="CP000112">
    <property type="protein sequence ID" value="ABB39497.1"/>
    <property type="status" value="ALT_INIT"/>
    <property type="molecule type" value="Genomic_DNA"/>
</dbReference>
<dbReference type="RefSeq" id="WP_011368524.1">
    <property type="nucleotide sequence ID" value="NC_007519.1"/>
</dbReference>
<dbReference type="SMR" id="Q30XU9"/>
<dbReference type="STRING" id="207559.Dde_2701"/>
<dbReference type="KEGG" id="dde:Dde_2701"/>
<dbReference type="eggNOG" id="COG0636">
    <property type="taxonomic scope" value="Bacteria"/>
</dbReference>
<dbReference type="HOGENOM" id="CLU_148047_0_0_7"/>
<dbReference type="Proteomes" id="UP000002710">
    <property type="component" value="Chromosome"/>
</dbReference>
<dbReference type="GO" id="GO:0005886">
    <property type="term" value="C:plasma membrane"/>
    <property type="evidence" value="ECO:0007669"/>
    <property type="project" value="UniProtKB-SubCell"/>
</dbReference>
<dbReference type="GO" id="GO:0045259">
    <property type="term" value="C:proton-transporting ATP synthase complex"/>
    <property type="evidence" value="ECO:0007669"/>
    <property type="project" value="UniProtKB-KW"/>
</dbReference>
<dbReference type="GO" id="GO:0033177">
    <property type="term" value="C:proton-transporting two-sector ATPase complex, proton-transporting domain"/>
    <property type="evidence" value="ECO:0007669"/>
    <property type="project" value="InterPro"/>
</dbReference>
<dbReference type="GO" id="GO:0008289">
    <property type="term" value="F:lipid binding"/>
    <property type="evidence" value="ECO:0007669"/>
    <property type="project" value="UniProtKB-KW"/>
</dbReference>
<dbReference type="GO" id="GO:0046933">
    <property type="term" value="F:proton-transporting ATP synthase activity, rotational mechanism"/>
    <property type="evidence" value="ECO:0007669"/>
    <property type="project" value="UniProtKB-UniRule"/>
</dbReference>
<dbReference type="CDD" id="cd18121">
    <property type="entry name" value="ATP-synt_Fo_c"/>
    <property type="match status" value="1"/>
</dbReference>
<dbReference type="Gene3D" id="1.20.20.10">
    <property type="entry name" value="F1F0 ATP synthase subunit C"/>
    <property type="match status" value="1"/>
</dbReference>
<dbReference type="HAMAP" id="MF_01396">
    <property type="entry name" value="ATP_synth_c_bact"/>
    <property type="match status" value="1"/>
</dbReference>
<dbReference type="InterPro" id="IPR005953">
    <property type="entry name" value="ATP_synth_csu_bac/chlpt"/>
</dbReference>
<dbReference type="InterPro" id="IPR000454">
    <property type="entry name" value="ATP_synth_F0_csu"/>
</dbReference>
<dbReference type="InterPro" id="IPR020537">
    <property type="entry name" value="ATP_synth_F0_csu_DDCD_BS"/>
</dbReference>
<dbReference type="InterPro" id="IPR038662">
    <property type="entry name" value="ATP_synth_F0_csu_sf"/>
</dbReference>
<dbReference type="InterPro" id="IPR002379">
    <property type="entry name" value="ATPase_proteolipid_c-like_dom"/>
</dbReference>
<dbReference type="InterPro" id="IPR035921">
    <property type="entry name" value="F/V-ATP_Csub_sf"/>
</dbReference>
<dbReference type="NCBIfam" id="TIGR01260">
    <property type="entry name" value="ATP_synt_c"/>
    <property type="match status" value="1"/>
</dbReference>
<dbReference type="Pfam" id="PF00137">
    <property type="entry name" value="ATP-synt_C"/>
    <property type="match status" value="1"/>
</dbReference>
<dbReference type="PRINTS" id="PR00124">
    <property type="entry name" value="ATPASEC"/>
</dbReference>
<dbReference type="SUPFAM" id="SSF81333">
    <property type="entry name" value="F1F0 ATP synthase subunit C"/>
    <property type="match status" value="1"/>
</dbReference>
<dbReference type="PROSITE" id="PS00605">
    <property type="entry name" value="ATPASE_C"/>
    <property type="match status" value="1"/>
</dbReference>
<organism>
    <name type="scientific">Oleidesulfovibrio alaskensis (strain ATCC BAA-1058 / DSM 17464 / G20)</name>
    <name type="common">Desulfovibrio alaskensis</name>
    <dbReference type="NCBI Taxonomy" id="207559"/>
    <lineage>
        <taxon>Bacteria</taxon>
        <taxon>Pseudomonadati</taxon>
        <taxon>Thermodesulfobacteriota</taxon>
        <taxon>Desulfovibrionia</taxon>
        <taxon>Desulfovibrionales</taxon>
        <taxon>Desulfovibrionaceae</taxon>
        <taxon>Oleidesulfovibrio</taxon>
    </lineage>
</organism>
<keyword id="KW-0066">ATP synthesis</keyword>
<keyword id="KW-0997">Cell inner membrane</keyword>
<keyword id="KW-1003">Cell membrane</keyword>
<keyword id="KW-0138">CF(0)</keyword>
<keyword id="KW-0375">Hydrogen ion transport</keyword>
<keyword id="KW-0406">Ion transport</keyword>
<keyword id="KW-0446">Lipid-binding</keyword>
<keyword id="KW-0472">Membrane</keyword>
<keyword id="KW-1185">Reference proteome</keyword>
<keyword id="KW-0812">Transmembrane</keyword>
<keyword id="KW-1133">Transmembrane helix</keyword>
<keyword id="KW-0813">Transport</keyword>
<gene>
    <name evidence="1" type="primary">atpE</name>
    <name type="ordered locus">Dde_2701</name>
</gene>
<sequence>MIALNTLAILSVASLAFAADGGAGDGLVLFGAAIGMAIAAAGCGIGQGMGLKAACEGTARNPEAGGKIMVTLILGLAFVESLAIYALVVNLMLLFR</sequence>
<accession>Q30XU9</accession>
<proteinExistence type="inferred from homology"/>
<name>ATPL_OLEA2</name>
<feature type="chain" id="PRO_5000103013" description="ATP synthase subunit c">
    <location>
        <begin position="1"/>
        <end position="96"/>
    </location>
</feature>
<feature type="transmembrane region" description="Helical" evidence="1">
    <location>
        <begin position="26"/>
        <end position="46"/>
    </location>
</feature>
<feature type="transmembrane region" description="Helical" evidence="1">
    <location>
        <begin position="68"/>
        <end position="88"/>
    </location>
</feature>
<feature type="site" description="Reversibly protonated during proton transport" evidence="1">
    <location>
        <position position="80"/>
    </location>
</feature>
<evidence type="ECO:0000255" key="1">
    <source>
        <dbReference type="HAMAP-Rule" id="MF_01396"/>
    </source>
</evidence>
<evidence type="ECO:0000305" key="2"/>
<comment type="function">
    <text evidence="1">F(1)F(0) ATP synthase produces ATP from ADP in the presence of a proton or sodium gradient. F-type ATPases consist of two structural domains, F(1) containing the extramembraneous catalytic core and F(0) containing the membrane proton channel, linked together by a central stalk and a peripheral stalk. During catalysis, ATP synthesis in the catalytic domain of F(1) is coupled via a rotary mechanism of the central stalk subunits to proton translocation.</text>
</comment>
<comment type="function">
    <text evidence="1">Key component of the F(0) channel; it plays a direct role in translocation across the membrane. A homomeric c-ring of between 10-14 subunits forms the central stalk rotor element with the F(1) delta and epsilon subunits.</text>
</comment>
<comment type="subunit">
    <text evidence="1">F-type ATPases have 2 components, F(1) - the catalytic core - and F(0) - the membrane proton channel. F(1) has five subunits: alpha(3), beta(3), gamma(1), delta(1), epsilon(1). F(0) has three main subunits: a(1), b(2) and c(10-14). The alpha and beta chains form an alternating ring which encloses part of the gamma chain. F(1) is attached to F(0) by a central stalk formed by the gamma and epsilon chains, while a peripheral stalk is formed by the delta and b chains.</text>
</comment>
<comment type="subcellular location">
    <subcellularLocation>
        <location evidence="1">Cell inner membrane</location>
        <topology evidence="1">Multi-pass membrane protein</topology>
    </subcellularLocation>
</comment>
<comment type="similarity">
    <text evidence="1">Belongs to the ATPase C chain family.</text>
</comment>
<comment type="sequence caution" evidence="2">
    <conflict type="erroneous initiation">
        <sequence resource="EMBL-CDS" id="ABB39497"/>
    </conflict>
</comment>
<protein>
    <recommendedName>
        <fullName evidence="1">ATP synthase subunit c</fullName>
    </recommendedName>
    <alternativeName>
        <fullName evidence="1">ATP synthase F(0) sector subunit c</fullName>
    </alternativeName>
    <alternativeName>
        <fullName evidence="1">F-type ATPase subunit c</fullName>
        <shortName evidence="1">F-ATPase subunit c</shortName>
    </alternativeName>
    <alternativeName>
        <fullName evidence="1">Lipid-binding protein</fullName>
    </alternativeName>
</protein>